<accession>O83456</accession>
<reference key="1">
    <citation type="journal article" date="1998" name="Science">
        <title>Complete genome sequence of Treponema pallidum, the syphilis spirochete.</title>
        <authorList>
            <person name="Fraser C.M."/>
            <person name="Norris S.J."/>
            <person name="Weinstock G.M."/>
            <person name="White O."/>
            <person name="Sutton G.G."/>
            <person name="Dodson R.J."/>
            <person name="Gwinn M.L."/>
            <person name="Hickey E.K."/>
            <person name="Clayton R.A."/>
            <person name="Ketchum K.A."/>
            <person name="Sodergren E."/>
            <person name="Hardham J.M."/>
            <person name="McLeod M.P."/>
            <person name="Salzberg S.L."/>
            <person name="Peterson J.D."/>
            <person name="Khalak H.G."/>
            <person name="Richardson D.L."/>
            <person name="Howell J.K."/>
            <person name="Chidambaram M."/>
            <person name="Utterback T.R."/>
            <person name="McDonald L.A."/>
            <person name="Artiach P."/>
            <person name="Bowman C."/>
            <person name="Cotton M.D."/>
            <person name="Fujii C."/>
            <person name="Garland S.A."/>
            <person name="Hatch B."/>
            <person name="Horst K."/>
            <person name="Roberts K.M."/>
            <person name="Sandusky M."/>
            <person name="Weidman J.F."/>
            <person name="Smith H.O."/>
            <person name="Venter J.C."/>
        </authorList>
    </citation>
    <scope>NUCLEOTIDE SEQUENCE [LARGE SCALE GENOMIC DNA]</scope>
    <source>
        <strain>Nichols</strain>
    </source>
</reference>
<evidence type="ECO:0000250" key="1"/>
<evidence type="ECO:0000255" key="2"/>
<evidence type="ECO:0000305" key="3"/>
<name>RECN_TREPA</name>
<protein>
    <recommendedName>
        <fullName>DNA repair protein RecN</fullName>
    </recommendedName>
    <alternativeName>
        <fullName>Recombination protein N</fullName>
    </alternativeName>
</protein>
<gene>
    <name type="primary">recN</name>
    <name type="ordered locus">TP_0442</name>
</gene>
<feature type="chain" id="PRO_0000188028" description="DNA repair protein RecN">
    <location>
        <begin position="1"/>
        <end position="573"/>
    </location>
</feature>
<feature type="binding site" evidence="2">
    <location>
        <begin position="29"/>
        <end position="36"/>
    </location>
    <ligand>
        <name>ATP</name>
        <dbReference type="ChEBI" id="CHEBI:30616"/>
    </ligand>
</feature>
<dbReference type="EMBL" id="AE000520">
    <property type="protein sequence ID" value="AAC65429.1"/>
    <property type="molecule type" value="Genomic_DNA"/>
</dbReference>
<dbReference type="PIR" id="B71324">
    <property type="entry name" value="B71324"/>
</dbReference>
<dbReference type="RefSeq" id="WP_010881890.1">
    <property type="nucleotide sequence ID" value="NC_021490.2"/>
</dbReference>
<dbReference type="SMR" id="O83456"/>
<dbReference type="STRING" id="243276.TP_0442"/>
<dbReference type="EnsemblBacteria" id="AAC65429">
    <property type="protein sequence ID" value="AAC65429"/>
    <property type="gene ID" value="TP_0442"/>
</dbReference>
<dbReference type="GeneID" id="93876212"/>
<dbReference type="KEGG" id="tpa:TP_0442"/>
<dbReference type="KEGG" id="tpw:TPANIC_0442"/>
<dbReference type="eggNOG" id="COG0497">
    <property type="taxonomic scope" value="Bacteria"/>
</dbReference>
<dbReference type="HOGENOM" id="CLU_018297_3_1_12"/>
<dbReference type="OrthoDB" id="9806954at2"/>
<dbReference type="Proteomes" id="UP000000811">
    <property type="component" value="Chromosome"/>
</dbReference>
<dbReference type="GO" id="GO:0043590">
    <property type="term" value="C:bacterial nucleoid"/>
    <property type="evidence" value="ECO:0007669"/>
    <property type="project" value="TreeGrafter"/>
</dbReference>
<dbReference type="GO" id="GO:0005524">
    <property type="term" value="F:ATP binding"/>
    <property type="evidence" value="ECO:0007669"/>
    <property type="project" value="UniProtKB-KW"/>
</dbReference>
<dbReference type="GO" id="GO:0006310">
    <property type="term" value="P:DNA recombination"/>
    <property type="evidence" value="ECO:0007669"/>
    <property type="project" value="InterPro"/>
</dbReference>
<dbReference type="GO" id="GO:0006281">
    <property type="term" value="P:DNA repair"/>
    <property type="evidence" value="ECO:0007669"/>
    <property type="project" value="UniProtKB-KW"/>
</dbReference>
<dbReference type="GO" id="GO:0009432">
    <property type="term" value="P:SOS response"/>
    <property type="evidence" value="ECO:0007669"/>
    <property type="project" value="TreeGrafter"/>
</dbReference>
<dbReference type="CDD" id="cd03241">
    <property type="entry name" value="ABC_RecN"/>
    <property type="match status" value="1"/>
</dbReference>
<dbReference type="Gene3D" id="3.40.50.300">
    <property type="entry name" value="P-loop containing nucleotide triphosphate hydrolases"/>
    <property type="match status" value="2"/>
</dbReference>
<dbReference type="InterPro" id="IPR004604">
    <property type="entry name" value="DNA_recomb/repair_RecN"/>
</dbReference>
<dbReference type="InterPro" id="IPR027417">
    <property type="entry name" value="P-loop_NTPase"/>
</dbReference>
<dbReference type="InterPro" id="IPR003395">
    <property type="entry name" value="RecF/RecN/SMC_N"/>
</dbReference>
<dbReference type="NCBIfam" id="TIGR00634">
    <property type="entry name" value="recN"/>
    <property type="match status" value="1"/>
</dbReference>
<dbReference type="PANTHER" id="PTHR11059">
    <property type="entry name" value="DNA REPAIR PROTEIN RECN"/>
    <property type="match status" value="1"/>
</dbReference>
<dbReference type="PANTHER" id="PTHR11059:SF0">
    <property type="entry name" value="DNA REPAIR PROTEIN RECN"/>
    <property type="match status" value="1"/>
</dbReference>
<dbReference type="Pfam" id="PF02463">
    <property type="entry name" value="SMC_N"/>
    <property type="match status" value="1"/>
</dbReference>
<dbReference type="PIRSF" id="PIRSF003128">
    <property type="entry name" value="RecN"/>
    <property type="match status" value="1"/>
</dbReference>
<dbReference type="SUPFAM" id="SSF52540">
    <property type="entry name" value="P-loop containing nucleoside triphosphate hydrolases"/>
    <property type="match status" value="1"/>
</dbReference>
<comment type="function">
    <text evidence="1">May be involved in recombinational repair of damaged DNA.</text>
</comment>
<comment type="similarity">
    <text evidence="3">Belongs to the RecN family.</text>
</comment>
<organism>
    <name type="scientific">Treponema pallidum (strain Nichols)</name>
    <dbReference type="NCBI Taxonomy" id="243276"/>
    <lineage>
        <taxon>Bacteria</taxon>
        <taxon>Pseudomonadati</taxon>
        <taxon>Spirochaetota</taxon>
        <taxon>Spirochaetia</taxon>
        <taxon>Spirochaetales</taxon>
        <taxon>Treponemataceae</taxon>
        <taxon>Treponema</taxon>
    </lineage>
</organism>
<proteinExistence type="inferred from homology"/>
<sequence length="573" mass="63571">MIEQLSVRNVALIQSLALEFGAQFTALSGETGAGKSMILGALSFLCGQKVGPDLIRKDENEAWVSAVFRCDHAPRAVHTWLAERSIEPEHHRVLLRRVMRRTGRGTAWIQNVPVSRADLEFFTSFFIDLHGQHEHQSLFRVAEHRRFLDTYGGLQQEVDAFTACYAALAERRAQLQRLASCEHNRQERLEFLSFALEELEHAALDVHEERALEGEEQKLCQHEKLCDVMQRVDAAIRGVDLQEGALLSSLKKALGALESACGIDGSLEPARARLESAYYEIEDVAHVLRTYTDGIQFCPDRLQHVQERLALIYRLKKKYGGTVAQVLEYRARAQQEMQDLSQAVGDKEALEQDVQRLMAQVLHAGRALSLKRHAVAEAFRTRVEGVLHRLGMASTRFHVQICTRDEQCAKQRTGPYGFDDVEFLISANAGEPARPLAKIASGGELSRVMLALKTVLSSVDEVGTLIFDEIDVGIGGETARAVAEHLQALSEHKQVVCITHLAMIAAHADAHVCVKKESSGEHTNTSAAHVVGERRVQEVARMLAGDTHSATSLAHAQELLRAGARQRRGECGD</sequence>
<keyword id="KW-0067">ATP-binding</keyword>
<keyword id="KW-0227">DNA damage</keyword>
<keyword id="KW-0234">DNA repair</keyword>
<keyword id="KW-0547">Nucleotide-binding</keyword>
<keyword id="KW-1185">Reference proteome</keyword>